<reference key="1">
    <citation type="journal article" date="2008" name="PLoS ONE">
        <title>Survival in nuclear waste, extreme resistance, and potential applications gleaned from the genome sequence of Kineococcus radiotolerans SRS30216.</title>
        <authorList>
            <person name="Bagwell C.E."/>
            <person name="Bhat S."/>
            <person name="Hawkins G.M."/>
            <person name="Smith B.W."/>
            <person name="Biswas T."/>
            <person name="Hoover T.R."/>
            <person name="Saunders E."/>
            <person name="Han C.S."/>
            <person name="Tsodikov O.V."/>
            <person name="Shimkets L.J."/>
        </authorList>
    </citation>
    <scope>NUCLEOTIDE SEQUENCE [LARGE SCALE GENOMIC DNA]</scope>
    <source>
        <strain>ATCC BAA-149 / DSM 14245 / SRS30216</strain>
    </source>
</reference>
<proteinExistence type="inferred from homology"/>
<sequence>MAVPKRKMSRSNTRSRRSQWKAAEETLVTSTVRGQVAYSRPHTARVVTDSAGTPLYLEYKGRKVKDL</sequence>
<dbReference type="EMBL" id="CP000750">
    <property type="protein sequence ID" value="ABS02863.1"/>
    <property type="molecule type" value="Genomic_DNA"/>
</dbReference>
<dbReference type="RefSeq" id="WP_012084274.1">
    <property type="nucleotide sequence ID" value="NC_009664.2"/>
</dbReference>
<dbReference type="SMR" id="A6W7S4"/>
<dbReference type="STRING" id="266940.Krad_1375"/>
<dbReference type="KEGG" id="kra:Krad_1375"/>
<dbReference type="eggNOG" id="COG0333">
    <property type="taxonomic scope" value="Bacteria"/>
</dbReference>
<dbReference type="HOGENOM" id="CLU_2805252_0_0_11"/>
<dbReference type="OrthoDB" id="9807363at2"/>
<dbReference type="Proteomes" id="UP000001116">
    <property type="component" value="Chromosome"/>
</dbReference>
<dbReference type="GO" id="GO:0015934">
    <property type="term" value="C:large ribosomal subunit"/>
    <property type="evidence" value="ECO:0007669"/>
    <property type="project" value="InterPro"/>
</dbReference>
<dbReference type="GO" id="GO:0003735">
    <property type="term" value="F:structural constituent of ribosome"/>
    <property type="evidence" value="ECO:0007669"/>
    <property type="project" value="InterPro"/>
</dbReference>
<dbReference type="GO" id="GO:0006412">
    <property type="term" value="P:translation"/>
    <property type="evidence" value="ECO:0007669"/>
    <property type="project" value="UniProtKB-UniRule"/>
</dbReference>
<dbReference type="HAMAP" id="MF_00340">
    <property type="entry name" value="Ribosomal_bL32"/>
    <property type="match status" value="1"/>
</dbReference>
<dbReference type="InterPro" id="IPR002677">
    <property type="entry name" value="Ribosomal_bL32"/>
</dbReference>
<dbReference type="InterPro" id="IPR011332">
    <property type="entry name" value="Ribosomal_zn-bd"/>
</dbReference>
<dbReference type="NCBIfam" id="TIGR01031">
    <property type="entry name" value="rpmF_bact"/>
    <property type="match status" value="1"/>
</dbReference>
<dbReference type="Pfam" id="PF01783">
    <property type="entry name" value="Ribosomal_L32p"/>
    <property type="match status" value="1"/>
</dbReference>
<dbReference type="SUPFAM" id="SSF57829">
    <property type="entry name" value="Zn-binding ribosomal proteins"/>
    <property type="match status" value="1"/>
</dbReference>
<keyword id="KW-1185">Reference proteome</keyword>
<keyword id="KW-0687">Ribonucleoprotein</keyword>
<keyword id="KW-0689">Ribosomal protein</keyword>
<feature type="chain" id="PRO_1000079332" description="Large ribosomal subunit protein bL32">
    <location>
        <begin position="1"/>
        <end position="67"/>
    </location>
</feature>
<feature type="region of interest" description="Disordered" evidence="2">
    <location>
        <begin position="1"/>
        <end position="22"/>
    </location>
</feature>
<feature type="compositionally biased region" description="Basic residues" evidence="2">
    <location>
        <begin position="1"/>
        <end position="19"/>
    </location>
</feature>
<gene>
    <name evidence="1" type="primary">rpmF</name>
    <name type="ordered locus">Krad_1375</name>
</gene>
<accession>A6W7S4</accession>
<evidence type="ECO:0000255" key="1">
    <source>
        <dbReference type="HAMAP-Rule" id="MF_00340"/>
    </source>
</evidence>
<evidence type="ECO:0000256" key="2">
    <source>
        <dbReference type="SAM" id="MobiDB-lite"/>
    </source>
</evidence>
<evidence type="ECO:0000305" key="3"/>
<protein>
    <recommendedName>
        <fullName evidence="1">Large ribosomal subunit protein bL32</fullName>
    </recommendedName>
    <alternativeName>
        <fullName evidence="3">50S ribosomal protein L32</fullName>
    </alternativeName>
</protein>
<name>RL32_KINRD</name>
<comment type="similarity">
    <text evidence="1">Belongs to the bacterial ribosomal protein bL32 family.</text>
</comment>
<organism>
    <name type="scientific">Kineococcus radiotolerans (strain ATCC BAA-149 / DSM 14245 / SRS30216)</name>
    <dbReference type="NCBI Taxonomy" id="266940"/>
    <lineage>
        <taxon>Bacteria</taxon>
        <taxon>Bacillati</taxon>
        <taxon>Actinomycetota</taxon>
        <taxon>Actinomycetes</taxon>
        <taxon>Kineosporiales</taxon>
        <taxon>Kineosporiaceae</taxon>
        <taxon>Kineococcus</taxon>
    </lineage>
</organism>